<evidence type="ECO:0000250" key="1">
    <source>
        <dbReference type="UniProtKB" id="P50135"/>
    </source>
</evidence>
<evidence type="ECO:0000255" key="2">
    <source>
        <dbReference type="PROSITE-ProRule" id="PRU00929"/>
    </source>
</evidence>
<reference key="1">
    <citation type="submission" date="2003-06" db="EMBL/GenBank/DDBJ databases">
        <authorList>
            <consortium name="NIH - Xenopus Gene Collection (XGC) project"/>
        </authorList>
    </citation>
    <scope>NUCLEOTIDE SEQUENCE [LARGE SCALE MRNA]</scope>
</reference>
<keyword id="KW-0963">Cytoplasm</keyword>
<keyword id="KW-0489">Methyltransferase</keyword>
<keyword id="KW-1185">Reference proteome</keyword>
<keyword id="KW-0949">S-adenosyl-L-methionine</keyword>
<keyword id="KW-0808">Transferase</keyword>
<organism>
    <name type="scientific">Xenopus laevis</name>
    <name type="common">African clawed frog</name>
    <dbReference type="NCBI Taxonomy" id="8355"/>
    <lineage>
        <taxon>Eukaryota</taxon>
        <taxon>Metazoa</taxon>
        <taxon>Chordata</taxon>
        <taxon>Craniata</taxon>
        <taxon>Vertebrata</taxon>
        <taxon>Euteleostomi</taxon>
        <taxon>Amphibia</taxon>
        <taxon>Batrachia</taxon>
        <taxon>Anura</taxon>
        <taxon>Pipoidea</taxon>
        <taxon>Pipidae</taxon>
        <taxon>Xenopodinae</taxon>
        <taxon>Xenopus</taxon>
        <taxon>Xenopus</taxon>
    </lineage>
</organism>
<sequence>MDSGLRSLLSDHSRYVESFRLFLQNSTEHQCMQHFIETKLPDIISSIGNDKPVIDVLGIGSGSGEIDLQMIAKIQARWPGVSINNQIVEPSAEQILGYKERVAKAPNLGYVTFSWHHQTSSEFEHRVTEDKQMTKYDFIHMIQMLYYVKDVPGTLKFFKSCLAPNGKLLIILVSGNSGWAPLWKKYGQRLPLNDLCLYVTAGDIAEMLSSMGARFQSHELQSDMDITKCFIEGDKNGELLLDFLTETCDFRKNAPAELRDQIICDLKSPRCSTTKDGKVIFNNNLSVIVVEAD</sequence>
<gene>
    <name type="primary">hnmt-b</name>
</gene>
<feature type="chain" id="PRO_0000271427" description="Histamine N-methyltransferase B">
    <location>
        <begin position="1"/>
        <end position="293"/>
    </location>
</feature>
<feature type="binding site" evidence="2">
    <location>
        <position position="28"/>
    </location>
    <ligand>
        <name>substrate</name>
    </ligand>
</feature>
<feature type="binding site" evidence="2">
    <location>
        <position position="60"/>
    </location>
    <ligand>
        <name>S-adenosyl-L-methionine</name>
        <dbReference type="ChEBI" id="CHEBI:59789"/>
    </ligand>
</feature>
<feature type="binding site" evidence="2">
    <location>
        <position position="89"/>
    </location>
    <ligand>
        <name>S-adenosyl-L-methionine</name>
        <dbReference type="ChEBI" id="CHEBI:59789"/>
    </ligand>
</feature>
<feature type="binding site" evidence="2">
    <location>
        <position position="94"/>
    </location>
    <ligand>
        <name>S-adenosyl-L-methionine</name>
        <dbReference type="ChEBI" id="CHEBI:59789"/>
    </ligand>
</feature>
<feature type="binding site" evidence="2">
    <location>
        <position position="120"/>
    </location>
    <ligand>
        <name>S-adenosyl-L-methionine</name>
        <dbReference type="ChEBI" id="CHEBI:59789"/>
    </ligand>
</feature>
<feature type="binding site" evidence="2">
    <location>
        <position position="142"/>
    </location>
    <ligand>
        <name>S-adenosyl-L-methionine</name>
        <dbReference type="ChEBI" id="CHEBI:59789"/>
    </ligand>
</feature>
<feature type="binding site" evidence="2">
    <location>
        <position position="283"/>
    </location>
    <ligand>
        <name>substrate</name>
    </ligand>
</feature>
<accession>Q7SYS9</accession>
<protein>
    <recommendedName>
        <fullName>Histamine N-methyltransferase B</fullName>
        <shortName>HMT B</shortName>
        <ecNumber evidence="1">2.1.1.8</ecNumber>
    </recommendedName>
</protein>
<name>HNMTB_XENLA</name>
<dbReference type="EC" id="2.1.1.8" evidence="1"/>
<dbReference type="EMBL" id="BC054281">
    <property type="protein sequence ID" value="AAH54281.1"/>
    <property type="molecule type" value="mRNA"/>
</dbReference>
<dbReference type="RefSeq" id="NP_001080614.1">
    <property type="nucleotide sequence ID" value="NM_001087145.1"/>
</dbReference>
<dbReference type="SMR" id="Q7SYS9"/>
<dbReference type="DNASU" id="380306"/>
<dbReference type="GeneID" id="380306"/>
<dbReference type="KEGG" id="xla:380306"/>
<dbReference type="AGR" id="Xenbase:XB-GENE-6253788"/>
<dbReference type="CTD" id="380306"/>
<dbReference type="Xenbase" id="XB-GENE-6253788">
    <property type="gene designation" value="hnmt.S"/>
</dbReference>
<dbReference type="OrthoDB" id="5984880at2759"/>
<dbReference type="Proteomes" id="UP000186698">
    <property type="component" value="Chromosome 9_10S"/>
</dbReference>
<dbReference type="Bgee" id="380306">
    <property type="expression patterns" value="Expressed in intestine and 5 other cell types or tissues"/>
</dbReference>
<dbReference type="GO" id="GO:0005737">
    <property type="term" value="C:cytoplasm"/>
    <property type="evidence" value="ECO:0000250"/>
    <property type="project" value="UniProtKB"/>
</dbReference>
<dbReference type="GO" id="GO:0046539">
    <property type="term" value="F:histamine N-methyltransferase activity"/>
    <property type="evidence" value="ECO:0000250"/>
    <property type="project" value="UniProtKB"/>
</dbReference>
<dbReference type="GO" id="GO:0001695">
    <property type="term" value="P:histamine catabolic process"/>
    <property type="evidence" value="ECO:0000250"/>
    <property type="project" value="UniProtKB"/>
</dbReference>
<dbReference type="GO" id="GO:0032259">
    <property type="term" value="P:methylation"/>
    <property type="evidence" value="ECO:0000250"/>
    <property type="project" value="UniProtKB"/>
</dbReference>
<dbReference type="CDD" id="cd02440">
    <property type="entry name" value="AdoMet_MTases"/>
    <property type="match status" value="1"/>
</dbReference>
<dbReference type="FunFam" id="3.40.50.150:FF:000118">
    <property type="entry name" value="Histamine N-methyltransferase"/>
    <property type="match status" value="1"/>
</dbReference>
<dbReference type="Gene3D" id="3.40.50.150">
    <property type="entry name" value="Vaccinia Virus protein VP39"/>
    <property type="match status" value="1"/>
</dbReference>
<dbReference type="InterPro" id="IPR016673">
    <property type="entry name" value="HHMT-like"/>
</dbReference>
<dbReference type="InterPro" id="IPR029063">
    <property type="entry name" value="SAM-dependent_MTases_sf"/>
</dbReference>
<dbReference type="Pfam" id="PF13489">
    <property type="entry name" value="Methyltransf_23"/>
    <property type="match status" value="1"/>
</dbReference>
<dbReference type="PIRSF" id="PIRSF016616">
    <property type="entry name" value="HHMT"/>
    <property type="match status" value="1"/>
</dbReference>
<dbReference type="SUPFAM" id="SSF53335">
    <property type="entry name" value="S-adenosyl-L-methionine-dependent methyltransferases"/>
    <property type="match status" value="1"/>
</dbReference>
<dbReference type="PROSITE" id="PS51597">
    <property type="entry name" value="SAM_HNMT"/>
    <property type="match status" value="1"/>
</dbReference>
<comment type="function">
    <text evidence="1">Inactivates histamine by N-methylation. Plays an important role in degrading histamine and in regulating the airway response to histamine.</text>
</comment>
<comment type="catalytic activity">
    <reaction evidence="1 2">
        <text>histamine + S-adenosyl-L-methionine = N(tau)-methylhistamine + S-adenosyl-L-homocysteine + H(+)</text>
        <dbReference type="Rhea" id="RHEA:19301"/>
        <dbReference type="ChEBI" id="CHEBI:15378"/>
        <dbReference type="ChEBI" id="CHEBI:57856"/>
        <dbReference type="ChEBI" id="CHEBI:58432"/>
        <dbReference type="ChEBI" id="CHEBI:58600"/>
        <dbReference type="ChEBI" id="CHEBI:59789"/>
        <dbReference type="EC" id="2.1.1.8"/>
    </reaction>
</comment>
<comment type="subunit">
    <text evidence="1">Monomer.</text>
</comment>
<comment type="subcellular location">
    <subcellularLocation>
        <location evidence="1">Cytoplasm</location>
    </subcellularLocation>
</comment>
<comment type="similarity">
    <text evidence="2">Belongs to the class I-like SAM-binding methyltransferase superfamily. HNMT family.</text>
</comment>
<proteinExistence type="evidence at transcript level"/>